<protein>
    <recommendedName>
        <fullName>Heart- and neural crest derivatives-expressed protein 1</fullName>
    </recommendedName>
    <alternativeName>
        <fullName>Extraembryonic tissues, heart, autonomic nervous system and neural crest derivatives-expressed protein 1</fullName>
        <shortName>eHAND</shortName>
    </alternativeName>
    <alternativeName>
        <fullName>Helix-loop-helix transcription factor expressed in extraembryonic mesoderm and trophoblast</fullName>
    </alternativeName>
    <alternativeName>
        <fullName>Thing-1</fullName>
        <shortName>Th1</shortName>
    </alternativeName>
</protein>
<organism>
    <name type="scientific">Mus musculus</name>
    <name type="common">Mouse</name>
    <dbReference type="NCBI Taxonomy" id="10090"/>
    <lineage>
        <taxon>Eukaryota</taxon>
        <taxon>Metazoa</taxon>
        <taxon>Chordata</taxon>
        <taxon>Craniata</taxon>
        <taxon>Vertebrata</taxon>
        <taxon>Euteleostomi</taxon>
        <taxon>Mammalia</taxon>
        <taxon>Eutheria</taxon>
        <taxon>Euarchontoglires</taxon>
        <taxon>Glires</taxon>
        <taxon>Rodentia</taxon>
        <taxon>Myomorpha</taxon>
        <taxon>Muroidea</taxon>
        <taxon>Muridae</taxon>
        <taxon>Murinae</taxon>
        <taxon>Mus</taxon>
        <taxon>Mus</taxon>
    </lineage>
</organism>
<sequence length="216" mass="23806">MNLVGSYAHHHHHHHSHPPHPMLHEPFLFGPASRCHQERPYFQSWLLSPADAAPDFPAGGPPPTTAVAAAAYGPDARPSQSPGRLEALGSRLPKRKGSGPKKERRRTESINSAFAELRECIPNVPADTKLSKIKTLRLATSYIAYLMDVLAKDAQAGDPEAFKAELKKTDGGRESKRKRELPQQPESFPPASGPGEKRIKGRTGWPQQVWALELNQ</sequence>
<proteinExistence type="evidence at protein level"/>
<reference key="1">
    <citation type="journal article" date="1995" name="Mol. Cell. Biol.">
        <title>Identification of a new family of tissue-specific basic helix-loop-helix proteins with a two-hybrid system.</title>
        <authorList>
            <person name="Hollenberg S.M."/>
            <person name="Sternglanz R."/>
            <person name="Cheng P.F."/>
            <person name="Weintraub H."/>
        </authorList>
    </citation>
    <scope>NUCLEOTIDE SEQUENCE [MRNA]</scope>
    <scope>FUNCTION</scope>
    <source>
        <strain>NIH Swiss</strain>
        <tissue>Embryo</tissue>
    </source>
</reference>
<reference key="2">
    <citation type="journal article" date="1995" name="Dev. Biol.">
        <title>Expression of the novel basic helix-loop-helix gene eHAND in neural crest derivatives and extraembryonic membranes during mouse development.</title>
        <authorList>
            <person name="Cserjesi P."/>
            <person name="Brown D."/>
            <person name="Lyons G.E."/>
            <person name="Olson E.N."/>
        </authorList>
    </citation>
    <scope>NUCLEOTIDE SEQUENCE [MRNA]</scope>
    <scope>DEVELOPMENTAL STAGE</scope>
    <source>
        <tissue>Embryo</tissue>
    </source>
</reference>
<reference key="3">
    <citation type="journal article" date="1995" name="Development">
        <title>Hxt encodes a basic helix-loop-helix transcription factor that regulates trophoblast cell development.</title>
        <authorList>
            <person name="Cross J.C."/>
            <person name="Flannery M.L."/>
            <person name="Blanar M.A."/>
            <person name="Steingrimsson E."/>
            <person name="Jenkins N.A."/>
            <person name="Copeland N.G."/>
            <person name="Rutter W.J."/>
            <person name="Werb Z."/>
        </authorList>
    </citation>
    <scope>NUCLEOTIDE SEQUENCE [MRNA]</scope>
    <source>
        <strain>129/Sv</strain>
        <tissue>Embryoid bodies</tissue>
    </source>
</reference>
<reference key="4">
    <citation type="journal article" date="1998" name="Nat. Genet.">
        <title>The Hand1 bHLH transcription factor is essential for placentation and cardiac morphogenesis.</title>
        <authorList>
            <person name="Riley P."/>
            <person name="Anson-Cartwright L."/>
            <person name="Cross J.C."/>
        </authorList>
    </citation>
    <scope>FUNCTION</scope>
    <scope>DEVELOPMENTAL STAGE</scope>
</reference>
<reference key="5">
    <citation type="journal article" date="2000" name="J. Biol. Chem.">
        <title>The basic helix-loop-helix transcription factors dHAND and eHAND exhibit dimerization characteristics that suggest complex regulation of function.</title>
        <authorList>
            <person name="Firulli B.A."/>
            <person name="Hadzic D.B."/>
            <person name="McDaid J.R."/>
            <person name="Firulli A.B."/>
        </authorList>
    </citation>
    <scope>SUBUNIT</scope>
</reference>
<reference key="6">
    <citation type="journal article" date="2006" name="Differentiation">
        <title>Sox15 enhances trophoblast giant cell differentiation induced by Hand1 in mouse placenta.</title>
        <authorList>
            <person name="Yamada K."/>
            <person name="Kanda H."/>
            <person name="Tanaka S."/>
            <person name="Takamatsu N."/>
            <person name="Shiba T."/>
            <person name="Ito M."/>
        </authorList>
    </citation>
    <scope>FUNCTION</scope>
    <scope>INTERACTION WITH SOX15</scope>
    <scope>DEVELOPMENTAL STAGE</scope>
</reference>
<reference key="7">
    <citation type="journal article" date="2007" name="Nat. Cell Biol.">
        <title>Nucleolar release of Hand1 acts as a molecular switch to determine cell fate.</title>
        <authorList>
            <person name="Martindill D.M.J."/>
            <person name="Risebro C.A."/>
            <person name="Smart N."/>
            <person name="Franco-Viseras Mdel M."/>
            <person name="Rosario C.O."/>
            <person name="Swallow C.J."/>
            <person name="Dennis J.W."/>
            <person name="Riley P.R."/>
        </authorList>
    </citation>
    <scope>SUBCELLULAR LOCATION</scope>
    <scope>INTERACTION WITH MDFIC</scope>
    <scope>PHOSPHORYLATION AT THR-107 AND SER-109</scope>
    <scope>MUTAGENESIS OF THR-107 AND SER-109</scope>
</reference>
<evidence type="ECO:0000250" key="1">
    <source>
        <dbReference type="UniProtKB" id="O96004"/>
    </source>
</evidence>
<evidence type="ECO:0000255" key="2">
    <source>
        <dbReference type="PROSITE-ProRule" id="PRU00981"/>
    </source>
</evidence>
<evidence type="ECO:0000256" key="3">
    <source>
        <dbReference type="SAM" id="MobiDB-lite"/>
    </source>
</evidence>
<evidence type="ECO:0000269" key="4">
    <source>
    </source>
</evidence>
<evidence type="ECO:0000269" key="5">
    <source>
    </source>
</evidence>
<evidence type="ECO:0000269" key="6">
    <source>
    </source>
</evidence>
<evidence type="ECO:0000269" key="7">
    <source>
    </source>
</evidence>
<evidence type="ECO:0000269" key="8">
    <source>
    </source>
</evidence>
<evidence type="ECO:0000269" key="9">
    <source>
    </source>
</evidence>
<evidence type="ECO:0000305" key="10"/>
<comment type="function">
    <text evidence="1 5 8 9">Transcription factor that plays an essential role in both trophoblast giant cell differentiation and in cardiac morphogenesis (PubMed:16759287, PubMed:9500551). Binds the DNA sequence 5'-NRTCTG-3' (non-canonical E-box) (PubMed:7791788). Acts as a transcriptional repressor of SOX15 (PubMed:16759287). In the adult, could be required for ongoing expression of cardiac-specific genes (By similarity).</text>
</comment>
<comment type="subunit">
    <text evidence="4 5 6">Efficient DNA binding requires dimerization with another bHLH protein. Forms homodimers and heterodimers with TCF3 gene products E12 and E47, HAND2 and HEY1, HEY2 and HEYL (hairy-related transcription factors). Interacts with MDFIC. Interacts with SOX15; the interaction enhances HAND1-induced differentiation of trophoblast giant cells (PubMed:16759287).</text>
</comment>
<comment type="interaction">
    <interactant intactId="EBI-81361">
        <id>Q64279</id>
    </interactant>
    <interactant intactId="EBI-81361">
        <id>Q64279</id>
        <label>Hand1</label>
    </interactant>
    <organismsDiffer>false</organismsDiffer>
    <experiments>2</experiments>
</comment>
<comment type="interaction">
    <interactant intactId="EBI-81361">
        <id>Q64279</id>
    </interactant>
    <interactant intactId="EBI-81388">
        <id>Q61039</id>
        <label>Hand2</label>
    </interactant>
    <organismsDiffer>false</organismsDiffer>
    <experiments>3</experiments>
</comment>
<comment type="interaction">
    <interactant intactId="EBI-81361">
        <id>Q64279</id>
    </interactant>
    <interactant intactId="EBI-81370">
        <id>P15806</id>
        <label>Tcf3</label>
    </interactant>
    <organismsDiffer>false</organismsDiffer>
    <experiments>2</experiments>
</comment>
<comment type="subcellular location">
    <subcellularLocation>
        <location evidence="6">Nucleus</location>
        <location evidence="6">Nucleoplasm</location>
    </subcellularLocation>
    <subcellularLocation>
        <location evidence="6">Nucleus</location>
        <location evidence="6">Nucleolus</location>
    </subcellularLocation>
    <text>Interaction with MDFIC sequesters it into the nucleolus, preventing the transcription factor activity. Phosphorylation by PLK4 disrupts the interaction with MDFIC and releases it from the nucleolus, leading to transcription factor activity.</text>
</comment>
<comment type="tissue specificity">
    <text>Smooth muscle cells of the gut and adrenal tissue.</text>
</comment>
<comment type="developmental stage">
    <text evidence="5 7 9">Present as a maternal transcript in the egg as well as during cleavage development before blastocyst formation. At 7.5 dpc, strongly expressed in all trophoblast cells (PubMed:16759287). Expression seen in the ectoplacental cone and extraembryonic mesodermal components of the amnion, allantois and visceral yolk sac. This high extraembryonic expression persists in the embryonic component of the placenta throughout development. In the embryo, expressed at 7.75 dpc in the lateral mesoderm along the entire length of the embryo as well as throughout the precardiogenic mesoderm. At 8.0 dpc, in the developing heart, expression becomes restricted to the rostral and caudal regions of the straight heart tube, which are fated to form the conotruncus and left ventricle, respectively. Symmetric expression is observed along the left-right axis in the caudal heart tube and lateral mesoderm. As cardiac looping occurs, the interrupted anterior-posterior patterning is maintained with expression in the future left, but not right ventricle. Expressed in the myocardium, but not in the endocardium, and specifically on the greater curvature of the looping heart which is opposed to the pericardium. After day 10.5 dpc, the high cardiac expression level declines abruptly. By 13.5 dpc, expression in the heart is restricted to the regions of valve formation. Besides the heart, expression becomes detectable in the gut at 9.0 dpc. At 10.0 dpc, expressed also in the lateral mesoderm and in the neural crest-derived branchial arches. At 10.5 dpc prominent expression in the gut, pharyngeal arches and in sympathetic ganglion primordia. At that stage, a low level of transient expression is seen in the distal posterior region of the limb bud. At 12 dpc expressed in the conceptus trophoblast giant cell layer in the placenta (PubMed:16759287). At 13.5 dpc expressed in neural crest derivatives, with abundant expression in the autonomic nervous system and adrenal medulla.</text>
</comment>
<comment type="PTM">
    <text evidence="6">Phosphorylation by PLK4 disrupts the interaction with MDFIC and leads to translocation into the nucleoplasm, allowing dimerization and transcription factor activity.</text>
</comment>
<name>HAND1_MOUSE</name>
<keyword id="KW-0010">Activator</keyword>
<keyword id="KW-0217">Developmental protein</keyword>
<keyword id="KW-0238">DNA-binding</keyword>
<keyword id="KW-0539">Nucleus</keyword>
<keyword id="KW-0597">Phosphoprotein</keyword>
<keyword id="KW-1185">Reference proteome</keyword>
<keyword id="KW-0804">Transcription</keyword>
<keyword id="KW-0805">Transcription regulation</keyword>
<gene>
    <name type="primary">Hand1</name>
    <name type="synonym">Ehand</name>
    <name type="synonym">Hxt</name>
    <name type="synonym">Thing1</name>
</gene>
<dbReference type="EMBL" id="U21226">
    <property type="protein sequence ID" value="AAA86887.1"/>
    <property type="molecule type" value="mRNA"/>
</dbReference>
<dbReference type="EMBL" id="S79216">
    <property type="protein sequence ID" value="AAB35104.1"/>
    <property type="molecule type" value="mRNA"/>
</dbReference>
<dbReference type="EMBL" id="U43714">
    <property type="protein sequence ID" value="AAA86273.1"/>
    <property type="molecule type" value="mRNA"/>
</dbReference>
<dbReference type="CCDS" id="CCDS24721.1"/>
<dbReference type="RefSeq" id="NP_032239.1">
    <property type="nucleotide sequence ID" value="NM_008213.2"/>
</dbReference>
<dbReference type="SMR" id="Q64279"/>
<dbReference type="BioGRID" id="200204">
    <property type="interactions" value="7"/>
</dbReference>
<dbReference type="DIP" id="DIP-455N"/>
<dbReference type="FunCoup" id="Q64279">
    <property type="interactions" value="1826"/>
</dbReference>
<dbReference type="IntAct" id="Q64279">
    <property type="interactions" value="6"/>
</dbReference>
<dbReference type="STRING" id="10090.ENSMUSP00000046999"/>
<dbReference type="GlyGen" id="Q64279">
    <property type="glycosylation" value="1 site"/>
</dbReference>
<dbReference type="iPTMnet" id="Q64279"/>
<dbReference type="PhosphoSitePlus" id="Q64279"/>
<dbReference type="PaxDb" id="10090-ENSMUSP00000046999"/>
<dbReference type="ProteomicsDB" id="271389"/>
<dbReference type="Antibodypedia" id="16446">
    <property type="antibodies" value="378 antibodies from 35 providers"/>
</dbReference>
<dbReference type="DNASU" id="15110"/>
<dbReference type="Ensembl" id="ENSMUST00000036917.3">
    <property type="protein sequence ID" value="ENSMUSP00000046999.3"/>
    <property type="gene ID" value="ENSMUSG00000037335.14"/>
</dbReference>
<dbReference type="Ensembl" id="ENSMUST00000160392.9">
    <property type="protein sequence ID" value="ENSMUSP00000124951.3"/>
    <property type="gene ID" value="ENSMUSG00000037335.14"/>
</dbReference>
<dbReference type="GeneID" id="15110"/>
<dbReference type="KEGG" id="mmu:15110"/>
<dbReference type="UCSC" id="uc007jaf.1">
    <property type="organism name" value="mouse"/>
</dbReference>
<dbReference type="AGR" id="MGI:103577"/>
<dbReference type="CTD" id="9421"/>
<dbReference type="MGI" id="MGI:103577">
    <property type="gene designation" value="Hand1"/>
</dbReference>
<dbReference type="VEuPathDB" id="HostDB:ENSMUSG00000037335"/>
<dbReference type="eggNOG" id="KOG4029">
    <property type="taxonomic scope" value="Eukaryota"/>
</dbReference>
<dbReference type="GeneTree" id="ENSGT00940000161111"/>
<dbReference type="HOGENOM" id="CLU_119591_0_0_1"/>
<dbReference type="InParanoid" id="Q64279"/>
<dbReference type="OMA" id="SRCHQDR"/>
<dbReference type="OrthoDB" id="10055449at2759"/>
<dbReference type="PhylomeDB" id="Q64279"/>
<dbReference type="TreeFam" id="TF315153"/>
<dbReference type="BioGRID-ORCS" id="15110">
    <property type="hits" value="1 hit in 78 CRISPR screens"/>
</dbReference>
<dbReference type="ChiTaRS" id="Hand1">
    <property type="organism name" value="mouse"/>
</dbReference>
<dbReference type="PRO" id="PR:Q64279"/>
<dbReference type="Proteomes" id="UP000000589">
    <property type="component" value="Chromosome 11"/>
</dbReference>
<dbReference type="RNAct" id="Q64279">
    <property type="molecule type" value="protein"/>
</dbReference>
<dbReference type="Bgee" id="ENSMUSG00000037335">
    <property type="expression patterns" value="Expressed in ectoplacental cone and 109 other cell types or tissues"/>
</dbReference>
<dbReference type="ExpressionAtlas" id="Q64279">
    <property type="expression patterns" value="baseline and differential"/>
</dbReference>
<dbReference type="GO" id="GO:0005737">
    <property type="term" value="C:cytoplasm"/>
    <property type="evidence" value="ECO:0007669"/>
    <property type="project" value="Ensembl"/>
</dbReference>
<dbReference type="GO" id="GO:0005730">
    <property type="term" value="C:nucleolus"/>
    <property type="evidence" value="ECO:0000314"/>
    <property type="project" value="UniProtKB"/>
</dbReference>
<dbReference type="GO" id="GO:0005654">
    <property type="term" value="C:nucleoplasm"/>
    <property type="evidence" value="ECO:0000314"/>
    <property type="project" value="UniProtKB"/>
</dbReference>
<dbReference type="GO" id="GO:0005634">
    <property type="term" value="C:nucleus"/>
    <property type="evidence" value="ECO:0000314"/>
    <property type="project" value="MGI"/>
</dbReference>
<dbReference type="GO" id="GO:0090575">
    <property type="term" value="C:RNA polymerase II transcription regulator complex"/>
    <property type="evidence" value="ECO:0007669"/>
    <property type="project" value="Ensembl"/>
</dbReference>
<dbReference type="GO" id="GO:0043425">
    <property type="term" value="F:bHLH transcription factor binding"/>
    <property type="evidence" value="ECO:0000353"/>
    <property type="project" value="UniProtKB"/>
</dbReference>
<dbReference type="GO" id="GO:0003677">
    <property type="term" value="F:DNA binding"/>
    <property type="evidence" value="ECO:0000314"/>
    <property type="project" value="MGI"/>
</dbReference>
<dbReference type="GO" id="GO:0001228">
    <property type="term" value="F:DNA-binding transcription activator activity, RNA polymerase II-specific"/>
    <property type="evidence" value="ECO:0000314"/>
    <property type="project" value="BHF-UCL"/>
</dbReference>
<dbReference type="GO" id="GO:0001227">
    <property type="term" value="F:DNA-binding transcription repressor activity, RNA polymerase II-specific"/>
    <property type="evidence" value="ECO:0007669"/>
    <property type="project" value="Ensembl"/>
</dbReference>
<dbReference type="GO" id="GO:0019899">
    <property type="term" value="F:enzyme binding"/>
    <property type="evidence" value="ECO:0000353"/>
    <property type="project" value="UniProtKB"/>
</dbReference>
<dbReference type="GO" id="GO:0042802">
    <property type="term" value="F:identical protein binding"/>
    <property type="evidence" value="ECO:0000314"/>
    <property type="project" value="MGI"/>
</dbReference>
<dbReference type="GO" id="GO:0042803">
    <property type="term" value="F:protein homodimerization activity"/>
    <property type="evidence" value="ECO:0000353"/>
    <property type="project" value="BHF-UCL"/>
</dbReference>
<dbReference type="GO" id="GO:0000978">
    <property type="term" value="F:RNA polymerase II cis-regulatory region sequence-specific DNA binding"/>
    <property type="evidence" value="ECO:0007669"/>
    <property type="project" value="Ensembl"/>
</dbReference>
<dbReference type="GO" id="GO:0061629">
    <property type="term" value="F:RNA polymerase II-specific DNA-binding transcription factor binding"/>
    <property type="evidence" value="ECO:0007669"/>
    <property type="project" value="Ensembl"/>
</dbReference>
<dbReference type="GO" id="GO:0043565">
    <property type="term" value="F:sequence-specific DNA binding"/>
    <property type="evidence" value="ECO:0000316"/>
    <property type="project" value="MGI"/>
</dbReference>
<dbReference type="GO" id="GO:0001221">
    <property type="term" value="F:transcription coregulator binding"/>
    <property type="evidence" value="ECO:0000353"/>
    <property type="project" value="BHF-UCL"/>
</dbReference>
<dbReference type="GO" id="GO:0001525">
    <property type="term" value="P:angiogenesis"/>
    <property type="evidence" value="ECO:0000315"/>
    <property type="project" value="MGI"/>
</dbReference>
<dbReference type="GO" id="GO:0003218">
    <property type="term" value="P:cardiac left ventricle formation"/>
    <property type="evidence" value="ECO:0007669"/>
    <property type="project" value="Ensembl"/>
</dbReference>
<dbReference type="GO" id="GO:0003219">
    <property type="term" value="P:cardiac right ventricle formation"/>
    <property type="evidence" value="ECO:0007669"/>
    <property type="project" value="Ensembl"/>
</dbReference>
<dbReference type="GO" id="GO:0060411">
    <property type="term" value="P:cardiac septum morphogenesis"/>
    <property type="evidence" value="ECO:0007669"/>
    <property type="project" value="Ensembl"/>
</dbReference>
<dbReference type="GO" id="GO:0060536">
    <property type="term" value="P:cartilage morphogenesis"/>
    <property type="evidence" value="ECO:0000316"/>
    <property type="project" value="MGI"/>
</dbReference>
<dbReference type="GO" id="GO:0030154">
    <property type="term" value="P:cell differentiation"/>
    <property type="evidence" value="ECO:0000316"/>
    <property type="project" value="MGI"/>
</dbReference>
<dbReference type="GO" id="GO:0001709">
    <property type="term" value="P:cell fate determination"/>
    <property type="evidence" value="ECO:0000303"/>
    <property type="project" value="UniProtKB"/>
</dbReference>
<dbReference type="GO" id="GO:0061371">
    <property type="term" value="P:determination of heart left/right asymmetry"/>
    <property type="evidence" value="ECO:0000315"/>
    <property type="project" value="MGI"/>
</dbReference>
<dbReference type="GO" id="GO:0035050">
    <property type="term" value="P:embryonic heart tube development"/>
    <property type="evidence" value="ECO:0000315"/>
    <property type="project" value="MGI"/>
</dbReference>
<dbReference type="GO" id="GO:0003144">
    <property type="term" value="P:embryonic heart tube formation"/>
    <property type="evidence" value="ECO:0000315"/>
    <property type="project" value="MGI"/>
</dbReference>
<dbReference type="GO" id="GO:0007507">
    <property type="term" value="P:heart development"/>
    <property type="evidence" value="ECO:0000315"/>
    <property type="project" value="MGI"/>
</dbReference>
<dbReference type="GO" id="GO:0001947">
    <property type="term" value="P:heart looping"/>
    <property type="evidence" value="ECO:0000315"/>
    <property type="project" value="MGI"/>
</dbReference>
<dbReference type="GO" id="GO:0003007">
    <property type="term" value="P:heart morphogenesis"/>
    <property type="evidence" value="ECO:0000304"/>
    <property type="project" value="BHF-UCL"/>
</dbReference>
<dbReference type="GO" id="GO:0001701">
    <property type="term" value="P:in utero embryonic development"/>
    <property type="evidence" value="ECO:0000315"/>
    <property type="project" value="MGI"/>
</dbReference>
<dbReference type="GO" id="GO:0060485">
    <property type="term" value="P:mesenchyme development"/>
    <property type="evidence" value="ECO:0000316"/>
    <property type="project" value="MGI"/>
</dbReference>
<dbReference type="GO" id="GO:0001707">
    <property type="term" value="P:mesoderm formation"/>
    <property type="evidence" value="ECO:0000315"/>
    <property type="project" value="MGI"/>
</dbReference>
<dbReference type="GO" id="GO:0000122">
    <property type="term" value="P:negative regulation of transcription by RNA polymerase II"/>
    <property type="evidence" value="ECO:0000316"/>
    <property type="project" value="UniProtKB"/>
</dbReference>
<dbReference type="GO" id="GO:0042475">
    <property type="term" value="P:odontogenesis of dentin-containing tooth"/>
    <property type="evidence" value="ECO:0000316"/>
    <property type="project" value="MGI"/>
</dbReference>
<dbReference type="GO" id="GO:0045944">
    <property type="term" value="P:positive regulation of transcription by RNA polymerase II"/>
    <property type="evidence" value="ECO:0000314"/>
    <property type="project" value="BHF-UCL"/>
</dbReference>
<dbReference type="GO" id="GO:0001829">
    <property type="term" value="P:trophectodermal cell differentiation"/>
    <property type="evidence" value="ECO:0007669"/>
    <property type="project" value="Ensembl"/>
</dbReference>
<dbReference type="GO" id="GO:0060707">
    <property type="term" value="P:trophoblast giant cell differentiation"/>
    <property type="evidence" value="ECO:0000314"/>
    <property type="project" value="MGI"/>
</dbReference>
<dbReference type="GO" id="GO:0055010">
    <property type="term" value="P:ventricular cardiac muscle tissue morphogenesis"/>
    <property type="evidence" value="ECO:0000315"/>
    <property type="project" value="MGI"/>
</dbReference>
<dbReference type="CDD" id="cd18952">
    <property type="entry name" value="bHLH_TS_HAND1"/>
    <property type="match status" value="1"/>
</dbReference>
<dbReference type="FunFam" id="4.10.280.10:FF:000010">
    <property type="entry name" value="Scleraxis bHLH transcription factor"/>
    <property type="match status" value="1"/>
</dbReference>
<dbReference type="Gene3D" id="4.10.280.10">
    <property type="entry name" value="Helix-loop-helix DNA-binding domain"/>
    <property type="match status" value="1"/>
</dbReference>
<dbReference type="InterPro" id="IPR011598">
    <property type="entry name" value="bHLH_dom"/>
</dbReference>
<dbReference type="InterPro" id="IPR050283">
    <property type="entry name" value="E-box_TF_Regulators"/>
</dbReference>
<dbReference type="InterPro" id="IPR036638">
    <property type="entry name" value="HLH_DNA-bd_sf"/>
</dbReference>
<dbReference type="PANTHER" id="PTHR23349">
    <property type="entry name" value="BASIC HELIX-LOOP-HELIX TRANSCRIPTION FACTOR, TWIST"/>
    <property type="match status" value="1"/>
</dbReference>
<dbReference type="PANTHER" id="PTHR23349:SF3">
    <property type="entry name" value="HEART- AND NEURAL CREST DERIVATIVES-EXPRESSED PROTEIN 1"/>
    <property type="match status" value="1"/>
</dbReference>
<dbReference type="Pfam" id="PF00010">
    <property type="entry name" value="HLH"/>
    <property type="match status" value="1"/>
</dbReference>
<dbReference type="SMART" id="SM00353">
    <property type="entry name" value="HLH"/>
    <property type="match status" value="1"/>
</dbReference>
<dbReference type="SUPFAM" id="SSF47459">
    <property type="entry name" value="HLH, helix-loop-helix DNA-binding domain"/>
    <property type="match status" value="1"/>
</dbReference>
<dbReference type="PROSITE" id="PS50888">
    <property type="entry name" value="BHLH"/>
    <property type="match status" value="1"/>
</dbReference>
<accession>Q64279</accession>
<accession>Q61099</accession>
<feature type="chain" id="PRO_0000127185" description="Heart- and neural crest derivatives-expressed protein 1">
    <location>
        <begin position="1"/>
        <end position="216"/>
    </location>
</feature>
<feature type="domain" description="bHLH" evidence="2">
    <location>
        <begin position="94"/>
        <end position="146"/>
    </location>
</feature>
<feature type="region of interest" description="Disordered" evidence="3">
    <location>
        <begin position="1"/>
        <end position="20"/>
    </location>
</feature>
<feature type="region of interest" description="Disordered" evidence="3">
    <location>
        <begin position="53"/>
        <end position="109"/>
    </location>
</feature>
<feature type="region of interest" description="Disordered" evidence="3">
    <location>
        <begin position="165"/>
        <end position="203"/>
    </location>
</feature>
<feature type="compositionally biased region" description="Basic residues" evidence="3">
    <location>
        <begin position="8"/>
        <end position="18"/>
    </location>
</feature>
<feature type="compositionally biased region" description="Low complexity" evidence="3">
    <location>
        <begin position="65"/>
        <end position="78"/>
    </location>
</feature>
<feature type="compositionally biased region" description="Basic residues" evidence="3">
    <location>
        <begin position="92"/>
        <end position="104"/>
    </location>
</feature>
<feature type="compositionally biased region" description="Basic and acidic residues" evidence="3">
    <location>
        <begin position="165"/>
        <end position="174"/>
    </location>
</feature>
<feature type="modified residue" description="Phosphothreonine; by PLK4" evidence="6">
    <location>
        <position position="107"/>
    </location>
</feature>
<feature type="modified residue" description="Phosphoserine; by PLK4" evidence="6">
    <location>
        <position position="109"/>
    </location>
</feature>
<feature type="mutagenesis site" description="Remains exclusively in the nucleolus; when associated with A-109." evidence="6">
    <original>T</original>
    <variation>A</variation>
    <location>
        <position position="107"/>
    </location>
</feature>
<feature type="mutagenesis site" description="Adopts a nucleus-wide distribution; when associated with D-109." evidence="6">
    <original>T</original>
    <variation>D</variation>
    <location>
        <position position="107"/>
    </location>
</feature>
<feature type="mutagenesis site" description="Remains exclusively in the nucleolus; when associated with A-107." evidence="6">
    <original>S</original>
    <variation>A</variation>
    <location>
        <position position="109"/>
    </location>
</feature>
<feature type="mutagenesis site" description="Adopts a nucleus-wide distribution; when associated with D-107." evidence="6">
    <original>S</original>
    <variation>D</variation>
    <location>
        <position position="109"/>
    </location>
</feature>
<feature type="sequence conflict" description="In Ref. 3; AAA86273." evidence="10" ref="3">
    <original>S</original>
    <variation>R</variation>
    <location>
        <position position="6"/>
    </location>
</feature>
<feature type="sequence conflict" description="In Ref. 3; AAA86273." evidence="10" ref="3">
    <original>P</original>
    <variation>A</variation>
    <location>
        <position position="19"/>
    </location>
</feature>
<feature type="sequence conflict" description="In Ref. 3; AAA86273." evidence="10" ref="3">
    <original>S</original>
    <variation>P</variation>
    <location>
        <position position="131"/>
    </location>
</feature>
<feature type="sequence conflict" description="In Ref. 3; AAA86273." evidence="10" ref="3">
    <original>V</original>
    <variation>A</variation>
    <location>
        <position position="149"/>
    </location>
</feature>
<feature type="sequence conflict" description="In Ref. 3; AAA86273." evidence="10" ref="3">
    <original>A</original>
    <variation>V</variation>
    <location>
        <position position="164"/>
    </location>
</feature>
<feature type="sequence conflict" description="In Ref. 3; AAA86273." evidence="10" ref="3">
    <original>S</original>
    <variation>G</variation>
    <location>
        <position position="187"/>
    </location>
</feature>
<feature type="sequence conflict" description="In Ref. 3; AAA86273." evidence="10" ref="3">
    <original>Q</original>
    <variation>K</variation>
    <location>
        <position position="208"/>
    </location>
</feature>